<feature type="chain" id="PRO_0000240814" description="DNA-directed RNA polymerase subunit beta'">
    <location>
        <begin position="1"/>
        <end position="1498"/>
    </location>
</feature>
<feature type="binding site" evidence="1">
    <location>
        <position position="67"/>
    </location>
    <ligand>
        <name>Zn(2+)</name>
        <dbReference type="ChEBI" id="CHEBI:29105"/>
        <label>1</label>
    </ligand>
</feature>
<feature type="binding site" evidence="1">
    <location>
        <position position="69"/>
    </location>
    <ligand>
        <name>Zn(2+)</name>
        <dbReference type="ChEBI" id="CHEBI:29105"/>
        <label>1</label>
    </ligand>
</feature>
<feature type="binding site" evidence="1">
    <location>
        <position position="82"/>
    </location>
    <ligand>
        <name>Zn(2+)</name>
        <dbReference type="ChEBI" id="CHEBI:29105"/>
        <label>1</label>
    </ligand>
</feature>
<feature type="binding site" evidence="1">
    <location>
        <position position="85"/>
    </location>
    <ligand>
        <name>Zn(2+)</name>
        <dbReference type="ChEBI" id="CHEBI:29105"/>
        <label>1</label>
    </ligand>
</feature>
<feature type="binding site" evidence="1">
    <location>
        <position position="499"/>
    </location>
    <ligand>
        <name>Mg(2+)</name>
        <dbReference type="ChEBI" id="CHEBI:18420"/>
    </ligand>
</feature>
<feature type="binding site" evidence="1">
    <location>
        <position position="501"/>
    </location>
    <ligand>
        <name>Mg(2+)</name>
        <dbReference type="ChEBI" id="CHEBI:18420"/>
    </ligand>
</feature>
<feature type="binding site" evidence="1">
    <location>
        <position position="503"/>
    </location>
    <ligand>
        <name>Mg(2+)</name>
        <dbReference type="ChEBI" id="CHEBI:18420"/>
    </ligand>
</feature>
<feature type="binding site" evidence="1">
    <location>
        <position position="867"/>
    </location>
    <ligand>
        <name>Zn(2+)</name>
        <dbReference type="ChEBI" id="CHEBI:29105"/>
        <label>2</label>
    </ligand>
</feature>
<feature type="binding site" evidence="1">
    <location>
        <position position="943"/>
    </location>
    <ligand>
        <name>Zn(2+)</name>
        <dbReference type="ChEBI" id="CHEBI:29105"/>
        <label>2</label>
    </ligand>
</feature>
<feature type="binding site" evidence="1">
    <location>
        <position position="950"/>
    </location>
    <ligand>
        <name>Zn(2+)</name>
        <dbReference type="ChEBI" id="CHEBI:29105"/>
        <label>2</label>
    </ligand>
</feature>
<feature type="binding site" evidence="1">
    <location>
        <position position="953"/>
    </location>
    <ligand>
        <name>Zn(2+)</name>
        <dbReference type="ChEBI" id="CHEBI:29105"/>
        <label>2</label>
    </ligand>
</feature>
<proteinExistence type="inferred from homology"/>
<dbReference type="EC" id="2.7.7.6" evidence="1"/>
<dbReference type="EMBL" id="CP000096">
    <property type="protein sequence ID" value="ABB24803.1"/>
    <property type="molecule type" value="Genomic_DNA"/>
</dbReference>
<dbReference type="RefSeq" id="WP_011358673.1">
    <property type="nucleotide sequence ID" value="NC_007512.1"/>
</dbReference>
<dbReference type="SMR" id="Q3B1H8"/>
<dbReference type="STRING" id="319225.Plut_1961"/>
<dbReference type="KEGG" id="plt:Plut_1961"/>
<dbReference type="eggNOG" id="COG0086">
    <property type="taxonomic scope" value="Bacteria"/>
</dbReference>
<dbReference type="HOGENOM" id="CLU_000524_3_1_10"/>
<dbReference type="OrthoDB" id="9815296at2"/>
<dbReference type="Proteomes" id="UP000002709">
    <property type="component" value="Chromosome"/>
</dbReference>
<dbReference type="GO" id="GO:0000428">
    <property type="term" value="C:DNA-directed RNA polymerase complex"/>
    <property type="evidence" value="ECO:0007669"/>
    <property type="project" value="UniProtKB-KW"/>
</dbReference>
<dbReference type="GO" id="GO:0003677">
    <property type="term" value="F:DNA binding"/>
    <property type="evidence" value="ECO:0007669"/>
    <property type="project" value="UniProtKB-UniRule"/>
</dbReference>
<dbReference type="GO" id="GO:0003899">
    <property type="term" value="F:DNA-directed RNA polymerase activity"/>
    <property type="evidence" value="ECO:0007669"/>
    <property type="project" value="UniProtKB-UniRule"/>
</dbReference>
<dbReference type="GO" id="GO:0000287">
    <property type="term" value="F:magnesium ion binding"/>
    <property type="evidence" value="ECO:0007669"/>
    <property type="project" value="UniProtKB-UniRule"/>
</dbReference>
<dbReference type="GO" id="GO:0008270">
    <property type="term" value="F:zinc ion binding"/>
    <property type="evidence" value="ECO:0007669"/>
    <property type="project" value="UniProtKB-UniRule"/>
</dbReference>
<dbReference type="GO" id="GO:0006351">
    <property type="term" value="P:DNA-templated transcription"/>
    <property type="evidence" value="ECO:0007669"/>
    <property type="project" value="UniProtKB-UniRule"/>
</dbReference>
<dbReference type="CDD" id="cd02655">
    <property type="entry name" value="RNAP_beta'_C"/>
    <property type="match status" value="1"/>
</dbReference>
<dbReference type="CDD" id="cd01609">
    <property type="entry name" value="RNAP_beta'_N"/>
    <property type="match status" value="1"/>
</dbReference>
<dbReference type="Gene3D" id="1.10.132.30">
    <property type="match status" value="1"/>
</dbReference>
<dbReference type="Gene3D" id="1.10.150.390">
    <property type="match status" value="1"/>
</dbReference>
<dbReference type="Gene3D" id="1.10.1790.20">
    <property type="match status" value="1"/>
</dbReference>
<dbReference type="Gene3D" id="1.10.40.90">
    <property type="match status" value="1"/>
</dbReference>
<dbReference type="Gene3D" id="2.40.40.20">
    <property type="match status" value="1"/>
</dbReference>
<dbReference type="Gene3D" id="2.40.50.100">
    <property type="match status" value="3"/>
</dbReference>
<dbReference type="Gene3D" id="4.10.860.120">
    <property type="entry name" value="RNA polymerase II, clamp domain"/>
    <property type="match status" value="1"/>
</dbReference>
<dbReference type="Gene3D" id="1.10.274.100">
    <property type="entry name" value="RNA polymerase Rpb1, domain 3"/>
    <property type="match status" value="1"/>
</dbReference>
<dbReference type="HAMAP" id="MF_01322">
    <property type="entry name" value="RNApol_bact_RpoC"/>
    <property type="match status" value="1"/>
</dbReference>
<dbReference type="InterPro" id="IPR045867">
    <property type="entry name" value="DNA-dir_RpoC_beta_prime"/>
</dbReference>
<dbReference type="InterPro" id="IPR012754">
    <property type="entry name" value="DNA-dir_RpoC_beta_prime_bact"/>
</dbReference>
<dbReference type="InterPro" id="IPR000722">
    <property type="entry name" value="RNA_pol_asu"/>
</dbReference>
<dbReference type="InterPro" id="IPR006592">
    <property type="entry name" value="RNA_pol_N"/>
</dbReference>
<dbReference type="InterPro" id="IPR007080">
    <property type="entry name" value="RNA_pol_Rpb1_1"/>
</dbReference>
<dbReference type="InterPro" id="IPR007066">
    <property type="entry name" value="RNA_pol_Rpb1_3"/>
</dbReference>
<dbReference type="InterPro" id="IPR042102">
    <property type="entry name" value="RNA_pol_Rpb1_3_sf"/>
</dbReference>
<dbReference type="InterPro" id="IPR007083">
    <property type="entry name" value="RNA_pol_Rpb1_4"/>
</dbReference>
<dbReference type="InterPro" id="IPR007081">
    <property type="entry name" value="RNA_pol_Rpb1_5"/>
</dbReference>
<dbReference type="InterPro" id="IPR044893">
    <property type="entry name" value="RNA_pol_Rpb1_clamp_domain"/>
</dbReference>
<dbReference type="InterPro" id="IPR038120">
    <property type="entry name" value="Rpb1_funnel_sf"/>
</dbReference>
<dbReference type="NCBIfam" id="TIGR02386">
    <property type="entry name" value="rpoC_TIGR"/>
    <property type="match status" value="1"/>
</dbReference>
<dbReference type="PANTHER" id="PTHR19376">
    <property type="entry name" value="DNA-DIRECTED RNA POLYMERASE"/>
    <property type="match status" value="1"/>
</dbReference>
<dbReference type="PANTHER" id="PTHR19376:SF54">
    <property type="entry name" value="DNA-DIRECTED RNA POLYMERASE SUBUNIT BETA"/>
    <property type="match status" value="1"/>
</dbReference>
<dbReference type="Pfam" id="PF04997">
    <property type="entry name" value="RNA_pol_Rpb1_1"/>
    <property type="match status" value="1"/>
</dbReference>
<dbReference type="Pfam" id="PF00623">
    <property type="entry name" value="RNA_pol_Rpb1_2"/>
    <property type="match status" value="2"/>
</dbReference>
<dbReference type="Pfam" id="PF04983">
    <property type="entry name" value="RNA_pol_Rpb1_3"/>
    <property type="match status" value="1"/>
</dbReference>
<dbReference type="Pfam" id="PF05000">
    <property type="entry name" value="RNA_pol_Rpb1_4"/>
    <property type="match status" value="1"/>
</dbReference>
<dbReference type="Pfam" id="PF04998">
    <property type="entry name" value="RNA_pol_Rpb1_5"/>
    <property type="match status" value="1"/>
</dbReference>
<dbReference type="SMART" id="SM00663">
    <property type="entry name" value="RPOLA_N"/>
    <property type="match status" value="1"/>
</dbReference>
<dbReference type="SUPFAM" id="SSF64484">
    <property type="entry name" value="beta and beta-prime subunits of DNA dependent RNA-polymerase"/>
    <property type="match status" value="1"/>
</dbReference>
<evidence type="ECO:0000255" key="1">
    <source>
        <dbReference type="HAMAP-Rule" id="MF_01322"/>
    </source>
</evidence>
<accession>Q3B1H8</accession>
<gene>
    <name evidence="1" type="primary">rpoC</name>
    <name type="ordered locus">Plut_1961</name>
</gene>
<name>RPOC_CHLL3</name>
<reference key="1">
    <citation type="submission" date="2005-08" db="EMBL/GenBank/DDBJ databases">
        <title>Complete sequence of Pelodictyon luteolum DSM 273.</title>
        <authorList>
            <consortium name="US DOE Joint Genome Institute"/>
            <person name="Copeland A."/>
            <person name="Lucas S."/>
            <person name="Lapidus A."/>
            <person name="Barry K."/>
            <person name="Detter J.C."/>
            <person name="Glavina T."/>
            <person name="Hammon N."/>
            <person name="Israni S."/>
            <person name="Pitluck S."/>
            <person name="Bryant D."/>
            <person name="Schmutz J."/>
            <person name="Larimer F."/>
            <person name="Land M."/>
            <person name="Kyrpides N."/>
            <person name="Ivanova N."/>
            <person name="Richardson P."/>
        </authorList>
    </citation>
    <scope>NUCLEOTIDE SEQUENCE [LARGE SCALE GENOMIC DNA]</scope>
    <source>
        <strain>DSM 273 / BCRC 81028 / 2530</strain>
    </source>
</reference>
<protein>
    <recommendedName>
        <fullName evidence="1">DNA-directed RNA polymerase subunit beta'</fullName>
        <shortName evidence="1">RNAP subunit beta'</shortName>
        <ecNumber evidence="1">2.7.7.6</ecNumber>
    </recommendedName>
    <alternativeName>
        <fullName evidence="1">RNA polymerase subunit beta'</fullName>
    </alternativeName>
    <alternativeName>
        <fullName evidence="1">Transcriptase subunit beta'</fullName>
    </alternativeName>
</protein>
<keyword id="KW-0240">DNA-directed RNA polymerase</keyword>
<keyword id="KW-0460">Magnesium</keyword>
<keyword id="KW-0479">Metal-binding</keyword>
<keyword id="KW-0548">Nucleotidyltransferase</keyword>
<keyword id="KW-1185">Reference proteome</keyword>
<keyword id="KW-0804">Transcription</keyword>
<keyword id="KW-0808">Transferase</keyword>
<keyword id="KW-0862">Zinc</keyword>
<organism>
    <name type="scientific">Chlorobium luteolum (strain DSM 273 / BCRC 81028 / 2530)</name>
    <name type="common">Pelodictyon luteolum</name>
    <dbReference type="NCBI Taxonomy" id="319225"/>
    <lineage>
        <taxon>Bacteria</taxon>
        <taxon>Pseudomonadati</taxon>
        <taxon>Chlorobiota</taxon>
        <taxon>Chlorobiia</taxon>
        <taxon>Chlorobiales</taxon>
        <taxon>Chlorobiaceae</taxon>
        <taxon>Chlorobium/Pelodictyon group</taxon>
        <taxon>Pelodictyon</taxon>
    </lineage>
</organism>
<sequence>MIFSQGASPLKGDFTRIKFSIASPESILAHSRGEVLKPETINYRTFKPERDGLMCEKIFGPTKDWECYCGKYKRVRYKGIICDRCGVEVTTKSVRRERMGHISLAVPVVHTWFFRSVPSKIGALLDLSTKELERIIYYEVYVVINPGEPGEKQGIKKLDRLTEEQYFQIITEYEDNQDLEDSDPQKFVAKMGGEAIHMLLKNLDLDGSAVLLRKILKESSSEQKRADALKRLKVVEAFRKSYEPQRKVRKKSTGLFPEDDIPEPYIYEGNKPEYMVMEAIPVIPPELRPLVPLEGGRFATSDLNDLYRRVIIRNNRLKKLIDIRAPEVILRNEKRMLQEAVDALFDNSRKANAVKTGESNRPLKSLSDALKGKQGRFRQNLLGKRVDYSGRSVIVVGPELKLHECGLPKSMAIELFQPFVIRRLVERGIAKSVKSAKKLIDKKDPIVWDVLEKVIDGRPVLLNRAPTLHRLGIQAFQPTLIEGKAIQIHPLVCTAFNADFDGDQMAVHVPLSQEAQLEASLLMLSSHNLILPQSGKPVTVPSQDMVLGMYYLTKSRPGSLGEAGIFYSREDVLIAHNEGRLGLHAQIFVQYDGRLDQKFDSLRALDWILEAGTEKYEWLKKQLEKKTMLLTTVGRVIFNESVPEEIGFINRVIDKKVAKELIGRLSSEVGNVETARFLDNIKQVGFHYAMKGGLSVGLSDAIVPETKAKHIKAAQRDSTRVVKEYNRGTLTDNERYNQIVDVWQKTSNIVAEESYQKLKKDREGFNPLYMMLDSGARGSREQVRQLTGMRGLIARPQKSMSGQPGEIIENPIISNLKEGLTVLEYFISTHGARKGLSDTSLKTADAGYLTRRLHDVAQDVIVTMDDCGTTRGLFIQRNIEEETSGQIKFREKIKGRVAARDIYDTITGNVIVPAGETITEELAEIIQDTPGVEEAEIRSVLTCESKIGICSRCYGTNLSVHKLVEIGEAVGVIAAQSIGEPGTQLTLRTFHQGGTAQGGISETETKAFNEGTVEFEDIKTVYHAAINEDGVEEQHTIVIQKNGKINIVDAESGKVLKRYVVPHGAHLAVAPGDQVKKDQVLFSSEPNSTQIIAEINGTVKFADIEKGVTYKEEVDPQTGFAQHTIINWRSKLRATETREPRLMIIDASGEVQKTYPVPIKSNLYVEDGQKVVPGDIMAKVPRNLDRVGGDITAGLPKVTELFEARIPTDPAIVTEIDGYVSFGSQRRSSKEIKVKNDFGEEKVYYVQVGKHVLANEGDEVKAGEPLTDGAVSPQDILRIQGPNAVQQYLVNEIQKVYQINAGVEINDKHLEVIVRQMLQKVRVEEPGDTELLPGDLIDRSVFLEANENVSEKVRISERGDAPPRIQDDQLHRLREITKLNRDLRKNEKQLIAFEPALQATSHPVLLGITSAALQTESVISAASFQETTKVLTDAAVAGKVDHLAGLKENVIVGKLIPAGTGLKKYKAIRLGGEAIEASDAAAAAAEAEAQARREAMDE</sequence>
<comment type="function">
    <text evidence="1">DNA-dependent RNA polymerase catalyzes the transcription of DNA into RNA using the four ribonucleoside triphosphates as substrates.</text>
</comment>
<comment type="catalytic activity">
    <reaction evidence="1">
        <text>RNA(n) + a ribonucleoside 5'-triphosphate = RNA(n+1) + diphosphate</text>
        <dbReference type="Rhea" id="RHEA:21248"/>
        <dbReference type="Rhea" id="RHEA-COMP:14527"/>
        <dbReference type="Rhea" id="RHEA-COMP:17342"/>
        <dbReference type="ChEBI" id="CHEBI:33019"/>
        <dbReference type="ChEBI" id="CHEBI:61557"/>
        <dbReference type="ChEBI" id="CHEBI:140395"/>
        <dbReference type="EC" id="2.7.7.6"/>
    </reaction>
</comment>
<comment type="cofactor">
    <cofactor evidence="1">
        <name>Mg(2+)</name>
        <dbReference type="ChEBI" id="CHEBI:18420"/>
    </cofactor>
    <text evidence="1">Binds 1 Mg(2+) ion per subunit.</text>
</comment>
<comment type="cofactor">
    <cofactor evidence="1">
        <name>Zn(2+)</name>
        <dbReference type="ChEBI" id="CHEBI:29105"/>
    </cofactor>
    <text evidence="1">Binds 2 Zn(2+) ions per subunit.</text>
</comment>
<comment type="subunit">
    <text evidence="1">The RNAP catalytic core consists of 2 alpha, 1 beta, 1 beta' and 1 omega subunit. When a sigma factor is associated with the core the holoenzyme is formed, which can initiate transcription.</text>
</comment>
<comment type="similarity">
    <text evidence="1">Belongs to the RNA polymerase beta' chain family.</text>
</comment>